<reference key="1">
    <citation type="journal article" date="2002" name="J. Gen. Virol.">
        <title>Genomic organization of infectious salmon anaemia virus.</title>
        <authorList>
            <person name="Clouthier S.C."/>
            <person name="Rector T."/>
            <person name="Brown N.E."/>
            <person name="Anderson E.D."/>
        </authorList>
    </citation>
    <scope>NUCLEOTIDE SEQUENCE [GENOMIC RNA]</scope>
</reference>
<reference key="2">
    <citation type="journal article" date="2011" name="Virus Res.">
        <title>Infectious salmon anemia virus--genetics and pathogenesis.</title>
        <authorList>
            <person name="Cottet L."/>
            <person name="Rivas-Aravena A."/>
            <person name="Cortez-San Martin M."/>
            <person name="Sandino A.M."/>
            <person name="Spencer E."/>
        </authorList>
    </citation>
    <scope>REVIEW</scope>
</reference>
<reference key="3">
    <citation type="journal article" date="2013" name="Virus Res.">
        <title>Infectious salmon anaemia virus nuclear export protein is encoded by a spliced gene product of genomic segment 7.</title>
        <authorList>
            <person name="Ramly R.B."/>
            <person name="Olsen C.M."/>
            <person name="Braaen S."/>
            <person name="Rimstad E."/>
        </authorList>
    </citation>
    <scope>FUNCTION</scope>
    <scope>ALTERNATIVE SPLICING</scope>
</reference>
<reference key="4">
    <citation type="journal article" date="2017" name="Virol. J.">
        <title>Subcellular localization and interactions of Infectious Salmon Anemia Virus (ISAV) M1 and NEP as well as host Hsc70.</title>
        <authorList>
            <person name="Zhang W."/>
            <person name="Cai C."/>
            <person name="Lin L."/>
            <person name="Tao Y.J."/>
            <person name="Jin M."/>
        </authorList>
    </citation>
    <scope>SUBCELLULAR LOCATION</scope>
    <scope>INTERACTION WITH HOST HSC70</scope>
</reference>
<organism>
    <name type="scientific">Infectious salmon anemia virus (isolate Atlantic salmon/Norway/810/9/99)</name>
    <name type="common">ISAV</name>
    <dbReference type="NCBI Taxonomy" id="652965"/>
    <lineage>
        <taxon>Viruses</taxon>
        <taxon>Riboviria</taxon>
        <taxon>Orthornavirae</taxon>
        <taxon>Negarnaviricota</taxon>
        <taxon>Polyploviricotina</taxon>
        <taxon>Insthoviricetes</taxon>
        <taxon>Articulavirales</taxon>
        <taxon>Orthomyxoviridae</taxon>
        <taxon>Isavirus</taxon>
        <taxon>Isavirus salaris</taxon>
    </lineage>
</organism>
<sequence>MNLLLLLQVASFLSDSKVPGEDGTSSTSGMLDLLRDQVDSLSINDSTTEPKTRLDPGLYPWLKWTETAYRSSTRSLASTIVMGALVQQRGSGNGITMRELELSLGLDFTSECDWLKTCYVNKNFVFLSEKEIAVNMEVEKFICNEN</sequence>
<accession>Q8V3U1</accession>
<feature type="chain" id="PRO_0000403923" description="Nuclear export protein">
    <location>
        <begin position="1"/>
        <end position="146"/>
    </location>
</feature>
<gene>
    <name evidence="3" type="primary">Segment-7</name>
    <name type="ORF">s7ORF2</name>
</gene>
<dbReference type="EMBL" id="AF404341">
    <property type="protein sequence ID" value="AAL67957.1"/>
    <property type="molecule type" value="Genomic_RNA"/>
</dbReference>
<dbReference type="RefSeq" id="YP_145799.1">
    <property type="nucleotide sequence ID" value="NC_006498.1"/>
</dbReference>
<dbReference type="KEGG" id="vg:71004590"/>
<dbReference type="Proteomes" id="UP000008772">
    <property type="component" value="Genome"/>
</dbReference>
<dbReference type="GO" id="GO:0030430">
    <property type="term" value="C:host cell cytoplasm"/>
    <property type="evidence" value="ECO:0007669"/>
    <property type="project" value="UniProtKB-SubCell"/>
</dbReference>
<name>NEP_ISAV8</name>
<organismHost>
    <name type="scientific">Gadus morhua</name>
    <name type="common">Atlantic cod</name>
    <dbReference type="NCBI Taxonomy" id="8049"/>
</organismHost>
<organismHost>
    <name type="scientific">Oncorhynchus kisutch</name>
    <name type="common">Coho salmon</name>
    <name type="synonym">Salmo kisutch</name>
    <dbReference type="NCBI Taxonomy" id="8019"/>
</organismHost>
<organismHost>
    <name type="scientific">Oncorhynchus mykiss</name>
    <name type="common">Rainbow trout</name>
    <name type="synonym">Salmo gairdneri</name>
    <dbReference type="NCBI Taxonomy" id="8022"/>
</organismHost>
<organismHost>
    <name type="scientific">Pollachius virens</name>
    <name type="common">Saithe</name>
    <name type="synonym">Gadus virens</name>
    <dbReference type="NCBI Taxonomy" id="8060"/>
</organismHost>
<organismHost>
    <name type="scientific">Salmo salar</name>
    <name type="common">Atlantic salmon</name>
    <dbReference type="NCBI Taxonomy" id="8030"/>
</organismHost>
<organismHost>
    <name type="scientific">Salmo trutta</name>
    <name type="common">Brown trout</name>
    <dbReference type="NCBI Taxonomy" id="8032"/>
</organismHost>
<evidence type="ECO:0000269" key="1">
    <source>
    </source>
</evidence>
<evidence type="ECO:0000269" key="2">
    <source>
    </source>
</evidence>
<evidence type="ECO:0000303" key="3">
    <source>
    </source>
</evidence>
<evidence type="ECO:0000303" key="4">
    <source>
    </source>
</evidence>
<evidence type="ECO:0000303" key="5">
    <source>
    </source>
</evidence>
<comment type="function">
    <text evidence="4 5">May mediate the nuclear export of encapsidated genomic RNAs (ribonucleoproteins, RNPs) (PubMed:23850870, PubMed:28202040). Interaction of viral NEP with M1-Hsc70 is thought to promote nuclear export of the viral encapsidated genomes (PubMed:28202040).</text>
</comment>
<comment type="subunit">
    <text evidence="2">Interacts with host HSC70.</text>
</comment>
<comment type="subcellular location">
    <subcellularLocation>
        <location evidence="2">Host cytoplasm</location>
    </subcellularLocation>
</comment>
<comment type="alternative products">
    <event type="alternative splicing"/>
    <isoform>
        <id>Q8V3U1-1</id>
        <name evidence="1">Nuclear export protein</name>
        <sequence type="displayed"/>
    </isoform>
    <isoform>
        <id>Q8V3U2-1</id>
        <name>Non-structural protein 1</name>
        <sequence type="external"/>
    </isoform>
</comment>
<protein>
    <recommendedName>
        <fullName>Nuclear export protein</fullName>
        <shortName>NEP</shortName>
    </recommendedName>
    <alternativeName>
        <fullName>Protein P5</fullName>
        <shortName>P5</shortName>
    </alternativeName>
</protein>
<keyword id="KW-0025">Alternative splicing</keyword>
<keyword id="KW-1035">Host cytoplasm</keyword>
<keyword id="KW-0945">Host-virus interaction</keyword>
<keyword id="KW-1185">Reference proteome</keyword>
<proteinExistence type="evidence at protein level"/>